<accession>Q9TYV2</accession>
<accession>U4PB50</accession>
<accession>U4PED8</accession>
<dbReference type="EC" id="2.7.8.-"/>
<dbReference type="EMBL" id="BX284602">
    <property type="protein sequence ID" value="CDH93085.1"/>
    <property type="molecule type" value="Genomic_DNA"/>
</dbReference>
<dbReference type="EMBL" id="BX284602">
    <property type="protein sequence ID" value="CDH93086.1"/>
    <property type="molecule type" value="Genomic_DNA"/>
</dbReference>
<dbReference type="PIR" id="T33807">
    <property type="entry name" value="T33807"/>
</dbReference>
<dbReference type="RefSeq" id="NP_001293556.1">
    <molecule id="Q9TYV2-1"/>
    <property type="nucleotide sequence ID" value="NM_001306627.2"/>
</dbReference>
<dbReference type="RefSeq" id="NP_001293557.1">
    <molecule id="Q9TYV2-3"/>
    <property type="nucleotide sequence ID" value="NM_001306628.3"/>
</dbReference>
<dbReference type="SMR" id="Q9TYV2"/>
<dbReference type="FunCoup" id="Q9TYV2">
    <property type="interactions" value="14"/>
</dbReference>
<dbReference type="STRING" id="6239.W07E6.3b.1"/>
<dbReference type="PaxDb" id="6239-W07E6.3a"/>
<dbReference type="EnsemblMetazoa" id="W07E6.3b.1">
    <molecule id="Q9TYV2-1"/>
    <property type="protein sequence ID" value="W07E6.3b.1"/>
    <property type="gene ID" value="WBGene00021075"/>
</dbReference>
<dbReference type="EnsemblMetazoa" id="W07E6.3c.1">
    <molecule id="Q9TYV2-3"/>
    <property type="protein sequence ID" value="W07E6.3c.1"/>
    <property type="gene ID" value="WBGene00021075"/>
</dbReference>
<dbReference type="GeneID" id="189276"/>
<dbReference type="KEGG" id="cel:CELE_W07E6.3"/>
<dbReference type="UCSC" id="W07E6.3">
    <molecule id="Q9TYV2-1"/>
    <property type="organism name" value="c. elegans"/>
</dbReference>
<dbReference type="AGR" id="WB:WBGene00021075"/>
<dbReference type="CTD" id="189276"/>
<dbReference type="WormBase" id="W07E6.3b">
    <molecule id="Q9TYV2-1"/>
    <property type="protein sequence ID" value="CE49035"/>
    <property type="gene ID" value="WBGene00021075"/>
    <property type="gene designation" value="sms-5"/>
</dbReference>
<dbReference type="WormBase" id="W07E6.3c">
    <molecule id="Q9TYV2-3"/>
    <property type="protein sequence ID" value="CE48509"/>
    <property type="gene ID" value="WBGene00021075"/>
    <property type="gene designation" value="sms-5"/>
</dbReference>
<dbReference type="eggNOG" id="KOG3058">
    <property type="taxonomic scope" value="Eukaryota"/>
</dbReference>
<dbReference type="HOGENOM" id="CLU_027104_0_2_1"/>
<dbReference type="InParanoid" id="Q9TYV2"/>
<dbReference type="OrthoDB" id="422827at2759"/>
<dbReference type="PhylomeDB" id="Q9TYV2"/>
<dbReference type="Reactome" id="R-CEL-1660661">
    <property type="pathway name" value="Sphingolipid de novo biosynthesis"/>
</dbReference>
<dbReference type="PRO" id="PR:Q9TYV2"/>
<dbReference type="Proteomes" id="UP000001940">
    <property type="component" value="Chromosome II"/>
</dbReference>
<dbReference type="Bgee" id="WBGene00021075">
    <property type="expression patterns" value="Expressed in larva and 3 other cell types or tissues"/>
</dbReference>
<dbReference type="GO" id="GO:0005789">
    <property type="term" value="C:endoplasmic reticulum membrane"/>
    <property type="evidence" value="ECO:0000318"/>
    <property type="project" value="GO_Central"/>
</dbReference>
<dbReference type="GO" id="GO:0000139">
    <property type="term" value="C:Golgi membrane"/>
    <property type="evidence" value="ECO:0000318"/>
    <property type="project" value="GO_Central"/>
</dbReference>
<dbReference type="GO" id="GO:0016020">
    <property type="term" value="C:membrane"/>
    <property type="evidence" value="ECO:0000303"/>
    <property type="project" value="UniProtKB"/>
</dbReference>
<dbReference type="GO" id="GO:0005886">
    <property type="term" value="C:plasma membrane"/>
    <property type="evidence" value="ECO:0000318"/>
    <property type="project" value="GO_Central"/>
</dbReference>
<dbReference type="GO" id="GO:0047493">
    <property type="term" value="F:ceramide cholinephosphotransferase activity"/>
    <property type="evidence" value="ECO:0000318"/>
    <property type="project" value="GO_Central"/>
</dbReference>
<dbReference type="GO" id="GO:0033188">
    <property type="term" value="F:sphingomyelin synthase activity"/>
    <property type="evidence" value="ECO:0000318"/>
    <property type="project" value="GO_Central"/>
</dbReference>
<dbReference type="GO" id="GO:0046513">
    <property type="term" value="P:ceramide biosynthetic process"/>
    <property type="evidence" value="ECO:0000318"/>
    <property type="project" value="GO_Central"/>
</dbReference>
<dbReference type="GO" id="GO:0006686">
    <property type="term" value="P:sphingomyelin biosynthetic process"/>
    <property type="evidence" value="ECO:0000318"/>
    <property type="project" value="GO_Central"/>
</dbReference>
<dbReference type="InterPro" id="IPR045221">
    <property type="entry name" value="Sphingomyelin_synth-like"/>
</dbReference>
<dbReference type="InterPro" id="IPR025749">
    <property type="entry name" value="Sphingomyelin_synth-like_dom"/>
</dbReference>
<dbReference type="PANTHER" id="PTHR21290:SF4">
    <property type="entry name" value="SPHINGOMYELIN SYNTHASE-RELATED 2"/>
    <property type="match status" value="1"/>
</dbReference>
<dbReference type="PANTHER" id="PTHR21290">
    <property type="entry name" value="SPHINGOMYELIN SYNTHETASE"/>
    <property type="match status" value="1"/>
</dbReference>
<dbReference type="Pfam" id="PF14360">
    <property type="entry name" value="PAP2_C"/>
    <property type="match status" value="1"/>
</dbReference>
<reference key="1">
    <citation type="journal article" date="1998" name="Science">
        <title>Genome sequence of the nematode C. elegans: a platform for investigating biology.</title>
        <authorList>
            <consortium name="The C. elegans sequencing consortium"/>
        </authorList>
    </citation>
    <scope>NUCLEOTIDE SEQUENCE [LARGE SCALE GENOMIC DNA]</scope>
    <source>
        <strain>Bristol N2</strain>
    </source>
</reference>
<reference evidence="3" key="2">
    <citation type="journal article" date="2004" name="EMBO J.">
        <title>Identification of a family of animal sphingomyelin synthases.</title>
        <authorList>
            <person name="Huitema K."/>
            <person name="Van Den Dikkenberg J."/>
            <person name="Brouwers J.F.H.M."/>
            <person name="Holthuis J.C."/>
        </authorList>
    </citation>
    <scope>IDENTIFICATION</scope>
</reference>
<proteinExistence type="inferred from homology"/>
<protein>
    <recommendedName>
        <fullName>Sphingomyelin synthase-related 2</fullName>
        <ecNumber>2.7.8.-</ecNumber>
    </recommendedName>
</protein>
<feature type="chain" id="PRO_0000221078" description="Sphingomyelin synthase-related 2">
    <location>
        <begin position="1"/>
        <end position="327"/>
    </location>
</feature>
<feature type="transmembrane region" description="Helical" evidence="2">
    <location>
        <begin position="54"/>
        <end position="74"/>
    </location>
</feature>
<feature type="transmembrane region" description="Helical" evidence="2">
    <location>
        <begin position="99"/>
        <end position="119"/>
    </location>
</feature>
<feature type="transmembrane region" description="Helical" evidence="2">
    <location>
        <begin position="131"/>
        <end position="151"/>
    </location>
</feature>
<feature type="transmembrane region" description="Helical" evidence="2">
    <location>
        <begin position="192"/>
        <end position="212"/>
    </location>
</feature>
<feature type="transmembrane region" description="Helical" evidence="2">
    <location>
        <begin position="220"/>
        <end position="240"/>
    </location>
</feature>
<feature type="topological domain" description="Cytoplasmic" evidence="2">
    <location>
        <begin position="241"/>
        <end position="327"/>
    </location>
</feature>
<feature type="active site" evidence="1">
    <location>
        <position position="201"/>
    </location>
</feature>
<feature type="active site" evidence="1">
    <location>
        <position position="244"/>
    </location>
</feature>
<feature type="active site" evidence="1">
    <location>
        <position position="248"/>
    </location>
</feature>
<feature type="splice variant" id="VSP_059558" description="In isoform c." evidence="3">
    <location>
        <begin position="1"/>
        <end position="106"/>
    </location>
</feature>
<keyword id="KW-0025">Alternative splicing</keyword>
<keyword id="KW-0443">Lipid metabolism</keyword>
<keyword id="KW-0472">Membrane</keyword>
<keyword id="KW-1185">Reference proteome</keyword>
<keyword id="KW-0746">Sphingolipid metabolism</keyword>
<keyword id="KW-0808">Transferase</keyword>
<keyword id="KW-0812">Transmembrane</keyword>
<keyword id="KW-1133">Transmembrane helix</keyword>
<gene>
    <name evidence="4" type="primary">sms-5</name>
    <name evidence="4" type="ORF">W07E6.3</name>
</gene>
<evidence type="ECO:0000250" key="1">
    <source>
        <dbReference type="UniProtKB" id="Q8NHU3"/>
    </source>
</evidence>
<evidence type="ECO:0000255" key="2"/>
<evidence type="ECO:0000305" key="3"/>
<evidence type="ECO:0000312" key="4">
    <source>
        <dbReference type="WormBase" id="W07E6.3b"/>
    </source>
</evidence>
<evidence type="ECO:0000312" key="5">
    <source>
        <dbReference type="WormBase" id="W07E6.3c"/>
    </source>
</evidence>
<organism>
    <name type="scientific">Caenorhabditis elegans</name>
    <dbReference type="NCBI Taxonomy" id="6239"/>
    <lineage>
        <taxon>Eukaryota</taxon>
        <taxon>Metazoa</taxon>
        <taxon>Ecdysozoa</taxon>
        <taxon>Nematoda</taxon>
        <taxon>Chromadorea</taxon>
        <taxon>Rhabditida</taxon>
        <taxon>Rhabditina</taxon>
        <taxon>Rhabditomorpha</taxon>
        <taxon>Rhabditoidea</taxon>
        <taxon>Rhabditidae</taxon>
        <taxon>Peloderinae</taxon>
        <taxon>Caenorhabditis</taxon>
    </lineage>
</organism>
<name>SMSR2_CAEEL</name>
<sequence>MKKDAENENLLHAYEHDEQSSKYFIKPDSRYSIDDDISVKIDGKQLEVRKWPTLLATAMVGVGWLSNEVALAWVHERVPDDYHPLPDLFFSHFPEIRGAIRIAEYIMMILLISALLVMFTHQHRWIVIRRVFFCIAMAYSFRALCVTIFQVPVPSINTYCAPKSNSSLELVAGRVVKMFWSAGIEQLRPRELCGDLIVSGHTLTIFTAFLVFKTYAPQRLQPLSHIYHVLAFTALFSILLARKHYMIDIVLGYTVSTRIFMEYHALAASYHNRTFETNPLAWSFWSFFIPIFECDAPANMHNHLLLYNRSTSSKNVSTLKKSRRSFE</sequence>
<comment type="subcellular location">
    <subcellularLocation>
        <location evidence="3">Membrane</location>
        <topology evidence="3">Multi-pass membrane protein</topology>
    </subcellularLocation>
</comment>
<comment type="alternative products">
    <event type="alternative splicing"/>
    <isoform>
        <id>Q9TYV2-1</id>
        <name evidence="4">b</name>
        <sequence type="displayed"/>
    </isoform>
    <isoform>
        <id>Q9TYV2-3</id>
        <name evidence="5">c</name>
        <sequence type="described" ref="VSP_059558"/>
    </isoform>
</comment>
<comment type="similarity">
    <text evidence="3">Belongs to the sphingomyelin synthase family.</text>
</comment>